<reference key="1">
    <citation type="journal article" date="2002" name="Nature">
        <title>Sequence and analysis of rice chromosome 4.</title>
        <authorList>
            <person name="Feng Q."/>
            <person name="Zhang Y."/>
            <person name="Hao P."/>
            <person name="Wang S."/>
            <person name="Fu G."/>
            <person name="Huang Y."/>
            <person name="Li Y."/>
            <person name="Zhu J."/>
            <person name="Liu Y."/>
            <person name="Hu X."/>
            <person name="Jia P."/>
            <person name="Zhang Y."/>
            <person name="Zhao Q."/>
            <person name="Ying K."/>
            <person name="Yu S."/>
            <person name="Tang Y."/>
            <person name="Weng Q."/>
            <person name="Zhang L."/>
            <person name="Lu Y."/>
            <person name="Mu J."/>
            <person name="Lu Y."/>
            <person name="Zhang L.S."/>
            <person name="Yu Z."/>
            <person name="Fan D."/>
            <person name="Liu X."/>
            <person name="Lu T."/>
            <person name="Li C."/>
            <person name="Wu Y."/>
            <person name="Sun T."/>
            <person name="Lei H."/>
            <person name="Li T."/>
            <person name="Hu H."/>
            <person name="Guan J."/>
            <person name="Wu M."/>
            <person name="Zhang R."/>
            <person name="Zhou B."/>
            <person name="Chen Z."/>
            <person name="Chen L."/>
            <person name="Jin Z."/>
            <person name="Wang R."/>
            <person name="Yin H."/>
            <person name="Cai Z."/>
            <person name="Ren S."/>
            <person name="Lv G."/>
            <person name="Gu W."/>
            <person name="Zhu G."/>
            <person name="Tu Y."/>
            <person name="Jia J."/>
            <person name="Zhang Y."/>
            <person name="Chen J."/>
            <person name="Kang H."/>
            <person name="Chen X."/>
            <person name="Shao C."/>
            <person name="Sun Y."/>
            <person name="Hu Q."/>
            <person name="Zhang X."/>
            <person name="Zhang W."/>
            <person name="Wang L."/>
            <person name="Ding C."/>
            <person name="Sheng H."/>
            <person name="Gu J."/>
            <person name="Chen S."/>
            <person name="Ni L."/>
            <person name="Zhu F."/>
            <person name="Chen W."/>
            <person name="Lan L."/>
            <person name="Lai Y."/>
            <person name="Cheng Z."/>
            <person name="Gu M."/>
            <person name="Jiang J."/>
            <person name="Li J."/>
            <person name="Hong G."/>
            <person name="Xue Y."/>
            <person name="Han B."/>
        </authorList>
    </citation>
    <scope>NUCLEOTIDE SEQUENCE [LARGE SCALE GENOMIC DNA]</scope>
    <source>
        <strain>cv. Nipponbare</strain>
    </source>
</reference>
<reference key="2">
    <citation type="journal article" date="2005" name="Nature">
        <title>The map-based sequence of the rice genome.</title>
        <authorList>
            <consortium name="International rice genome sequencing project (IRGSP)"/>
        </authorList>
    </citation>
    <scope>NUCLEOTIDE SEQUENCE [LARGE SCALE GENOMIC DNA]</scope>
    <source>
        <strain>cv. Nipponbare</strain>
    </source>
</reference>
<reference key="3">
    <citation type="journal article" date="2008" name="Nucleic Acids Res.">
        <title>The rice annotation project database (RAP-DB): 2008 update.</title>
        <authorList>
            <consortium name="The rice annotation project (RAP)"/>
        </authorList>
    </citation>
    <scope>GENOME REANNOTATION</scope>
    <source>
        <strain>cv. Nipponbare</strain>
    </source>
</reference>
<reference key="4">
    <citation type="journal article" date="2013" name="Rice">
        <title>Improvement of the Oryza sativa Nipponbare reference genome using next generation sequence and optical map data.</title>
        <authorList>
            <person name="Kawahara Y."/>
            <person name="de la Bastide M."/>
            <person name="Hamilton J.P."/>
            <person name="Kanamori H."/>
            <person name="McCombie W.R."/>
            <person name="Ouyang S."/>
            <person name="Schwartz D.C."/>
            <person name="Tanaka T."/>
            <person name="Wu J."/>
            <person name="Zhou S."/>
            <person name="Childs K.L."/>
            <person name="Davidson R.M."/>
            <person name="Lin H."/>
            <person name="Quesada-Ocampo L."/>
            <person name="Vaillancourt B."/>
            <person name="Sakai H."/>
            <person name="Lee S.S."/>
            <person name="Kim J."/>
            <person name="Numa H."/>
            <person name="Itoh T."/>
            <person name="Buell C.R."/>
            <person name="Matsumoto T."/>
        </authorList>
    </citation>
    <scope>GENOME REANNOTATION</scope>
    <source>
        <strain>cv. Nipponbare</strain>
    </source>
</reference>
<reference key="5">
    <citation type="journal article" date="2005" name="PLoS Biol.">
        <title>The genomes of Oryza sativa: a history of duplications.</title>
        <authorList>
            <person name="Yu J."/>
            <person name="Wang J."/>
            <person name="Lin W."/>
            <person name="Li S."/>
            <person name="Li H."/>
            <person name="Zhou J."/>
            <person name="Ni P."/>
            <person name="Dong W."/>
            <person name="Hu S."/>
            <person name="Zeng C."/>
            <person name="Zhang J."/>
            <person name="Zhang Y."/>
            <person name="Li R."/>
            <person name="Xu Z."/>
            <person name="Li S."/>
            <person name="Li X."/>
            <person name="Zheng H."/>
            <person name="Cong L."/>
            <person name="Lin L."/>
            <person name="Yin J."/>
            <person name="Geng J."/>
            <person name="Li G."/>
            <person name="Shi J."/>
            <person name="Liu J."/>
            <person name="Lv H."/>
            <person name="Li J."/>
            <person name="Wang J."/>
            <person name="Deng Y."/>
            <person name="Ran L."/>
            <person name="Shi X."/>
            <person name="Wang X."/>
            <person name="Wu Q."/>
            <person name="Li C."/>
            <person name="Ren X."/>
            <person name="Wang J."/>
            <person name="Wang X."/>
            <person name="Li D."/>
            <person name="Liu D."/>
            <person name="Zhang X."/>
            <person name="Ji Z."/>
            <person name="Zhao W."/>
            <person name="Sun Y."/>
            <person name="Zhang Z."/>
            <person name="Bao J."/>
            <person name="Han Y."/>
            <person name="Dong L."/>
            <person name="Ji J."/>
            <person name="Chen P."/>
            <person name="Wu S."/>
            <person name="Liu J."/>
            <person name="Xiao Y."/>
            <person name="Bu D."/>
            <person name="Tan J."/>
            <person name="Yang L."/>
            <person name="Ye C."/>
            <person name="Zhang J."/>
            <person name="Xu J."/>
            <person name="Zhou Y."/>
            <person name="Yu Y."/>
            <person name="Zhang B."/>
            <person name="Zhuang S."/>
            <person name="Wei H."/>
            <person name="Liu B."/>
            <person name="Lei M."/>
            <person name="Yu H."/>
            <person name="Li Y."/>
            <person name="Xu H."/>
            <person name="Wei S."/>
            <person name="He X."/>
            <person name="Fang L."/>
            <person name="Zhang Z."/>
            <person name="Zhang Y."/>
            <person name="Huang X."/>
            <person name="Su Z."/>
            <person name="Tong W."/>
            <person name="Li J."/>
            <person name="Tong Z."/>
            <person name="Li S."/>
            <person name="Ye J."/>
            <person name="Wang L."/>
            <person name="Fang L."/>
            <person name="Lei T."/>
            <person name="Chen C.-S."/>
            <person name="Chen H.-C."/>
            <person name="Xu Z."/>
            <person name="Li H."/>
            <person name="Huang H."/>
            <person name="Zhang F."/>
            <person name="Xu H."/>
            <person name="Li N."/>
            <person name="Zhao C."/>
            <person name="Li S."/>
            <person name="Dong L."/>
            <person name="Huang Y."/>
            <person name="Li L."/>
            <person name="Xi Y."/>
            <person name="Qi Q."/>
            <person name="Li W."/>
            <person name="Zhang B."/>
            <person name="Hu W."/>
            <person name="Zhang Y."/>
            <person name="Tian X."/>
            <person name="Jiao Y."/>
            <person name="Liang X."/>
            <person name="Jin J."/>
            <person name="Gao L."/>
            <person name="Zheng W."/>
            <person name="Hao B."/>
            <person name="Liu S.-M."/>
            <person name="Wang W."/>
            <person name="Yuan L."/>
            <person name="Cao M."/>
            <person name="McDermott J."/>
            <person name="Samudrala R."/>
            <person name="Wang J."/>
            <person name="Wong G.K.-S."/>
            <person name="Yang H."/>
        </authorList>
    </citation>
    <scope>NUCLEOTIDE SEQUENCE [LARGE SCALE GENOMIC DNA]</scope>
    <source>
        <strain>cv. Nipponbare</strain>
    </source>
</reference>
<reference key="6">
    <citation type="journal article" date="2003" name="Science">
        <title>Collection, mapping, and annotation of over 28,000 cDNA clones from japonica rice.</title>
        <authorList>
            <consortium name="The rice full-length cDNA consortium"/>
        </authorList>
    </citation>
    <scope>NUCLEOTIDE SEQUENCE [LARGE SCALE MRNA]</scope>
    <source>
        <strain>cv. Nipponbare</strain>
    </source>
</reference>
<reference key="7">
    <citation type="journal article" date="2005" name="J. Mol. Evol.">
        <title>Evolution of NIN-like proteins in Arabidopsis, rice, and Lotus japonicus.</title>
        <authorList>
            <person name="Schauser L."/>
            <person name="Wieloch W."/>
            <person name="Stougaard J."/>
        </authorList>
    </citation>
    <scope>GENE FAMILY</scope>
    <scope>NOMENCLATURE</scope>
</reference>
<evidence type="ECO:0000250" key="1"/>
<evidence type="ECO:0000255" key="2">
    <source>
        <dbReference type="PROSITE-ProRule" id="PRU00852"/>
    </source>
</evidence>
<evidence type="ECO:0000255" key="3">
    <source>
        <dbReference type="PROSITE-ProRule" id="PRU01081"/>
    </source>
</evidence>
<evidence type="ECO:0000256" key="4">
    <source>
        <dbReference type="SAM" id="MobiDB-lite"/>
    </source>
</evidence>
<evidence type="ECO:0000303" key="5">
    <source>
    </source>
</evidence>
<evidence type="ECO:0000305" key="6"/>
<evidence type="ECO:0000312" key="7">
    <source>
        <dbReference type="EMBL" id="BAG95924.1"/>
    </source>
</evidence>
<evidence type="ECO:0000312" key="8">
    <source>
        <dbReference type="EMBL" id="BAS89886.1"/>
    </source>
</evidence>
<evidence type="ECO:0000312" key="9">
    <source>
        <dbReference type="EMBL" id="CAE03110.2"/>
    </source>
</evidence>
<evidence type="ECO:0000312" key="10">
    <source>
        <dbReference type="EMBL" id="EEE61255.1"/>
    </source>
</evidence>
<comment type="function">
    <text evidence="1">Probable transcription factor.</text>
</comment>
<comment type="subcellular location">
    <subcellularLocation>
        <location evidence="2">Nucleus</location>
    </subcellularLocation>
</comment>
<comment type="sequence caution" evidence="6">
    <conflict type="erroneous gene model prediction">
        <sequence resource="EMBL-CDS" id="BAF15110"/>
    </conflict>
</comment>
<comment type="sequence caution" evidence="6">
    <conflict type="erroneous gene model prediction">
        <sequence resource="EMBL-CDS" id="BAS89886"/>
    </conflict>
</comment>
<comment type="sequence caution" evidence="6">
    <conflict type="erroneous gene model prediction">
        <sequence resource="EMBL-CDS" id="EEE61255"/>
    </conflict>
</comment>
<accession>Q0JC27</accession>
<accession>A0A0P0WBZ3</accession>
<accession>B9FFX1</accession>
<accession>Q7XQI3</accession>
<organism>
    <name type="scientific">Oryza sativa subsp. japonica</name>
    <name type="common">Rice</name>
    <dbReference type="NCBI Taxonomy" id="39947"/>
    <lineage>
        <taxon>Eukaryota</taxon>
        <taxon>Viridiplantae</taxon>
        <taxon>Streptophyta</taxon>
        <taxon>Embryophyta</taxon>
        <taxon>Tracheophyta</taxon>
        <taxon>Spermatophyta</taxon>
        <taxon>Magnoliopsida</taxon>
        <taxon>Liliopsida</taxon>
        <taxon>Poales</taxon>
        <taxon>Poaceae</taxon>
        <taxon>BOP clade</taxon>
        <taxon>Oryzoideae</taxon>
        <taxon>Oryzeae</taxon>
        <taxon>Oryzinae</taxon>
        <taxon>Oryza</taxon>
        <taxon>Oryza sativa</taxon>
    </lineage>
</organism>
<name>NLP2_ORYSJ</name>
<feature type="chain" id="PRO_0000401501" description="Protein NLP2">
    <location>
        <begin position="1"/>
        <end position="936"/>
    </location>
</feature>
<feature type="domain" description="RWP-RK" evidence="2">
    <location>
        <begin position="550"/>
        <end position="635"/>
    </location>
</feature>
<feature type="domain" description="PB1" evidence="3">
    <location>
        <begin position="834"/>
        <end position="916"/>
    </location>
</feature>
<feature type="region of interest" description="Disordered" evidence="4">
    <location>
        <begin position="99"/>
        <end position="130"/>
    </location>
</feature>
<feature type="region of interest" description="Disordered" evidence="4">
    <location>
        <begin position="666"/>
        <end position="697"/>
    </location>
</feature>
<feature type="region of interest" description="Disordered" evidence="4">
    <location>
        <begin position="753"/>
        <end position="782"/>
    </location>
</feature>
<feature type="region of interest" description="Disordered" evidence="4">
    <location>
        <begin position="794"/>
        <end position="827"/>
    </location>
</feature>
<feature type="compositionally biased region" description="Basic and acidic residues" evidence="4">
    <location>
        <begin position="671"/>
        <end position="682"/>
    </location>
</feature>
<feature type="compositionally biased region" description="Polar residues" evidence="4">
    <location>
        <begin position="688"/>
        <end position="697"/>
    </location>
</feature>
<feature type="compositionally biased region" description="Low complexity" evidence="4">
    <location>
        <begin position="754"/>
        <end position="769"/>
    </location>
</feature>
<feature type="compositionally biased region" description="Polar residues" evidence="4">
    <location>
        <begin position="770"/>
        <end position="781"/>
    </location>
</feature>
<feature type="compositionally biased region" description="Low complexity" evidence="4">
    <location>
        <begin position="801"/>
        <end position="815"/>
    </location>
</feature>
<feature type="compositionally biased region" description="Polar residues" evidence="4">
    <location>
        <begin position="816"/>
        <end position="825"/>
    </location>
</feature>
<protein>
    <recommendedName>
        <fullName evidence="5">Protein NLP2</fullName>
        <shortName evidence="5">OsNLP2</shortName>
    </recommendedName>
    <alternativeName>
        <fullName evidence="5">NIN-like protein 2</fullName>
    </alternativeName>
    <alternativeName>
        <fullName evidence="5">Nodule inception protein-like protein 2</fullName>
    </alternativeName>
</protein>
<dbReference type="EMBL" id="AL606627">
    <property type="protein sequence ID" value="CAE03110.2"/>
    <property type="molecule type" value="Genomic_DNA"/>
</dbReference>
<dbReference type="EMBL" id="AP008210">
    <property type="protein sequence ID" value="BAF15110.1"/>
    <property type="status" value="ALT_SEQ"/>
    <property type="molecule type" value="Genomic_DNA"/>
</dbReference>
<dbReference type="EMBL" id="AP014960">
    <property type="protein sequence ID" value="BAS89886.1"/>
    <property type="status" value="ALT_SEQ"/>
    <property type="molecule type" value="Genomic_DNA"/>
</dbReference>
<dbReference type="EMBL" id="CM000141">
    <property type="protein sequence ID" value="EEE61255.1"/>
    <property type="status" value="ALT_SEQ"/>
    <property type="molecule type" value="Genomic_DNA"/>
</dbReference>
<dbReference type="EMBL" id="AK103154">
    <property type="protein sequence ID" value="BAG95924.1"/>
    <property type="molecule type" value="mRNA"/>
</dbReference>
<dbReference type="RefSeq" id="XP_015636521.1">
    <property type="nucleotide sequence ID" value="XM_015781035.1"/>
</dbReference>
<dbReference type="RefSeq" id="XP_015636522.1">
    <property type="nucleotide sequence ID" value="XM_015781036.1"/>
</dbReference>
<dbReference type="RefSeq" id="XP_015636523.1">
    <property type="nucleotide sequence ID" value="XM_015781037.1"/>
</dbReference>
<dbReference type="SMR" id="Q0JC27"/>
<dbReference type="FunCoup" id="Q0JC27">
    <property type="interactions" value="469"/>
</dbReference>
<dbReference type="STRING" id="39947.Q0JC27"/>
<dbReference type="PaxDb" id="39947-Q0JC27"/>
<dbReference type="GeneID" id="4336275"/>
<dbReference type="KEGG" id="dosa:Os04g0495800"/>
<dbReference type="KEGG" id="osa:4336275"/>
<dbReference type="eggNOG" id="ENOG502QQ6H">
    <property type="taxonomic scope" value="Eukaryota"/>
</dbReference>
<dbReference type="InParanoid" id="Q0JC27"/>
<dbReference type="OrthoDB" id="6270329at2759"/>
<dbReference type="Proteomes" id="UP000000763">
    <property type="component" value="Chromosome 4"/>
</dbReference>
<dbReference type="Proteomes" id="UP000007752">
    <property type="component" value="Chromosome 4"/>
</dbReference>
<dbReference type="Proteomes" id="UP000059680">
    <property type="component" value="Chromosome 4"/>
</dbReference>
<dbReference type="GO" id="GO:0005634">
    <property type="term" value="C:nucleus"/>
    <property type="evidence" value="ECO:0007669"/>
    <property type="project" value="UniProtKB-SubCell"/>
</dbReference>
<dbReference type="GO" id="GO:0003677">
    <property type="term" value="F:DNA binding"/>
    <property type="evidence" value="ECO:0007669"/>
    <property type="project" value="UniProtKB-KW"/>
</dbReference>
<dbReference type="GO" id="GO:0003700">
    <property type="term" value="F:DNA-binding transcription factor activity"/>
    <property type="evidence" value="ECO:0007669"/>
    <property type="project" value="InterPro"/>
</dbReference>
<dbReference type="Gene3D" id="3.10.20.90">
    <property type="entry name" value="Phosphatidylinositol 3-kinase Catalytic Subunit, Chain A, domain 1"/>
    <property type="match status" value="1"/>
</dbReference>
<dbReference type="InterPro" id="IPR045012">
    <property type="entry name" value="NLP"/>
</dbReference>
<dbReference type="InterPro" id="IPR055081">
    <property type="entry name" value="NLP1-9_GAF"/>
</dbReference>
<dbReference type="InterPro" id="IPR053793">
    <property type="entry name" value="PB1-like"/>
</dbReference>
<dbReference type="InterPro" id="IPR000270">
    <property type="entry name" value="PB1_dom"/>
</dbReference>
<dbReference type="InterPro" id="IPR003035">
    <property type="entry name" value="RWP-RK_dom"/>
</dbReference>
<dbReference type="PANTHER" id="PTHR32002">
    <property type="entry name" value="PROTEIN NLP8"/>
    <property type="match status" value="1"/>
</dbReference>
<dbReference type="PANTHER" id="PTHR32002:SF41">
    <property type="entry name" value="PROTEIN NLP8"/>
    <property type="match status" value="1"/>
</dbReference>
<dbReference type="Pfam" id="PF22922">
    <property type="entry name" value="GAF_NLP"/>
    <property type="match status" value="1"/>
</dbReference>
<dbReference type="Pfam" id="PF00564">
    <property type="entry name" value="PB1"/>
    <property type="match status" value="1"/>
</dbReference>
<dbReference type="Pfam" id="PF02042">
    <property type="entry name" value="RWP-RK"/>
    <property type="match status" value="1"/>
</dbReference>
<dbReference type="SMART" id="SM00666">
    <property type="entry name" value="PB1"/>
    <property type="match status" value="1"/>
</dbReference>
<dbReference type="SUPFAM" id="SSF54277">
    <property type="entry name" value="CAD &amp; PB1 domains"/>
    <property type="match status" value="1"/>
</dbReference>
<dbReference type="PROSITE" id="PS51745">
    <property type="entry name" value="PB1"/>
    <property type="match status" value="1"/>
</dbReference>
<dbReference type="PROSITE" id="PS51519">
    <property type="entry name" value="RWP_RK"/>
    <property type="match status" value="1"/>
</dbReference>
<sequence>MDMPTPSNRAGCNGNTGGTMGPSDDPYGAAAMNLDCYSEIYSPSVADQLFSLLNDPAAHRMFAMWPSMGSSPCAAGTSEDMPLDAYSGLGEAVEEPSQIMSVNPTEAEKTGKSSGELGSDDGAHQGSSMVPRSVVGSSLADRMLMALSLFRESLGSGALAQVWMPVEQEGHVVLSTCEQPFLLDQVLAGYREVSRHFVFSAKEEPGLQPGLPGRVFISGVPEWTSSVLYYNRPEYLRMEHALHHEIRGSLAMPIYDPSKDSCCAVFELVTRKEKPDFSAEMDNVCNALQAVNLKATKGSSNQKFYTENQKFAFTEILDVLRAICHAHMLPLALTWVPTSNGIDGGYVVGKDGASFSQSGKTIIRIHESACYVNDGKMQGFLQACARRHLEKGQGIAGRALKSNLPFFSPDIREYSIEDYPLAHHARKFSLHAAVAIRLRSTYTGNDDYILEFFLPVSCKGSGEQQMLLNNLSSTMQRICKSLRTVYEAEVDNVNAGTAAVFRKNNESCLPTGHTESSSHGDQSITGASFEDTSLANKPGVMEPELAEQVQPSSIGHAEKKRSTAEKNISLDVLRKYFSGSLKDAAKSLGVCPTTLKRICRHHGISRWPSRKINKVNRSLKKIQTVINSVHGVDRSLQYDPATGSLVPVVSLPEKLTFPSCDGLPTPSVGKTVEENSDLKSEEGCSLPDGSQRQSCQLQISDVKKSNEDEFHIGSGNSDFYGANATAKSNSEVTQGPLCPTGAFSALHLKGTDCTNPSSSLRPSSESTRNQIVGRNSPSIQQEDLDMLDNHEAEDKDHMHPSTSGMTDSSSGSASSHPTFKQNTRSALKDAASPALTVKATYNGDTVRFKFLPSMGWYHLLEEIAKRFKLPTGAYQLKYKDDEDEWVILANDSDLQECVDVLDSIGSRIVKLQVRDLPCIVSSSGSSTCLQLAAHSS</sequence>
<keyword id="KW-0238">DNA-binding</keyword>
<keyword id="KW-0539">Nucleus</keyword>
<keyword id="KW-1185">Reference proteome</keyword>
<keyword id="KW-0804">Transcription</keyword>
<keyword id="KW-0805">Transcription regulation</keyword>
<proteinExistence type="evidence at transcript level"/>
<gene>
    <name evidence="5" type="primary">NLP2</name>
    <name evidence="8" type="ordered locus">Os04g0495800</name>
    <name evidence="6" type="ordered locus">LOC_Os04g41850</name>
    <name evidence="7" type="ORF">J033120P08</name>
    <name evidence="10" type="ORF">OsJ_15319</name>
    <name evidence="9" type="ORF">OSJNBa0067K08.5</name>
</gene>